<gene>
    <name type="primary">mpt51</name>
    <name type="synonym">fbpC1</name>
    <name type="synonym">fbpD</name>
    <name type="synonym">mpb51</name>
    <name type="ordered locus">MT3910</name>
</gene>
<comment type="function">
    <text evidence="1">May have a role in host tissue attachment, whereby ligands may include the serum protein fibronectin and small sugars.</text>
</comment>
<comment type="subunit">
    <text evidence="1">Homodimer.</text>
</comment>
<comment type="subcellular location">
    <subcellularLocation>
        <location evidence="1">Secreted</location>
    </subcellularLocation>
</comment>
<comment type="similarity">
    <text evidence="3">Belongs to the mycobacterial A85 antigen family.</text>
</comment>
<comment type="sequence caution" evidence="3">
    <conflict type="erroneous initiation">
        <sequence resource="EMBL-CDS" id="AAK48276"/>
    </conflict>
    <text>Extended N-terminus.</text>
</comment>
<feature type="signal peptide" evidence="2">
    <location>
        <begin position="1"/>
        <end position="26"/>
    </location>
</feature>
<feature type="chain" id="PRO_0000426744" description="MPT51/MPB51 antigen">
    <location>
        <begin position="27"/>
        <end position="299"/>
    </location>
</feature>
<organism>
    <name type="scientific">Mycobacterium tuberculosis (strain CDC 1551 / Oshkosh)</name>
    <dbReference type="NCBI Taxonomy" id="83331"/>
    <lineage>
        <taxon>Bacteria</taxon>
        <taxon>Bacillati</taxon>
        <taxon>Actinomycetota</taxon>
        <taxon>Actinomycetes</taxon>
        <taxon>Mycobacteriales</taxon>
        <taxon>Mycobacteriaceae</taxon>
        <taxon>Mycobacterium</taxon>
        <taxon>Mycobacterium tuberculosis complex</taxon>
    </lineage>
</organism>
<evidence type="ECO:0000250" key="1"/>
<evidence type="ECO:0000255" key="2"/>
<evidence type="ECO:0000305" key="3"/>
<dbReference type="EMBL" id="AE000516">
    <property type="protein sequence ID" value="AAK48276.1"/>
    <property type="status" value="ALT_INIT"/>
    <property type="molecule type" value="Genomic_DNA"/>
</dbReference>
<dbReference type="PIR" id="G70887">
    <property type="entry name" value="G70887"/>
</dbReference>
<dbReference type="RefSeq" id="WP_003420783.1">
    <property type="nucleotide sequence ID" value="NZ_KK341227.1"/>
</dbReference>
<dbReference type="SMR" id="P9WQN6"/>
<dbReference type="ESTHER" id="myctu-mpt51">
    <property type="family name" value="A85-Mycolyl-transferase"/>
</dbReference>
<dbReference type="KEGG" id="mtc:MT3910"/>
<dbReference type="PATRIC" id="fig|83331.31.peg.4207"/>
<dbReference type="HOGENOM" id="CLU_026624_3_1_11"/>
<dbReference type="Proteomes" id="UP000001020">
    <property type="component" value="Chromosome"/>
</dbReference>
<dbReference type="GO" id="GO:0005576">
    <property type="term" value="C:extracellular region"/>
    <property type="evidence" value="ECO:0007669"/>
    <property type="project" value="UniProtKB-SubCell"/>
</dbReference>
<dbReference type="GO" id="GO:0016747">
    <property type="term" value="F:acyltransferase activity, transferring groups other than amino-acyl groups"/>
    <property type="evidence" value="ECO:0007669"/>
    <property type="project" value="TreeGrafter"/>
</dbReference>
<dbReference type="FunFam" id="3.40.50.1820:FF:000086">
    <property type="entry name" value="Diacylglycerol acyltransferase/mycolyltransferase Ag85C"/>
    <property type="match status" value="1"/>
</dbReference>
<dbReference type="Gene3D" id="3.40.50.1820">
    <property type="entry name" value="alpha/beta hydrolase"/>
    <property type="match status" value="1"/>
</dbReference>
<dbReference type="InterPro" id="IPR029058">
    <property type="entry name" value="AB_hydrolase_fold"/>
</dbReference>
<dbReference type="InterPro" id="IPR000801">
    <property type="entry name" value="Esterase-like"/>
</dbReference>
<dbReference type="InterPro" id="IPR050583">
    <property type="entry name" value="Mycobacterial_A85_antigen"/>
</dbReference>
<dbReference type="PANTHER" id="PTHR48098:SF1">
    <property type="entry name" value="DIACYLGLYCEROL ACYLTRANSFERASE_MYCOLYLTRANSFERASE AG85A"/>
    <property type="match status" value="1"/>
</dbReference>
<dbReference type="PANTHER" id="PTHR48098">
    <property type="entry name" value="ENTEROCHELIN ESTERASE-RELATED"/>
    <property type="match status" value="1"/>
</dbReference>
<dbReference type="Pfam" id="PF00756">
    <property type="entry name" value="Esterase"/>
    <property type="match status" value="1"/>
</dbReference>
<dbReference type="SUPFAM" id="SSF53474">
    <property type="entry name" value="alpha/beta-Hydrolases"/>
    <property type="match status" value="1"/>
</dbReference>
<reference key="1">
    <citation type="journal article" date="2002" name="J. Bacteriol.">
        <title>Whole-genome comparison of Mycobacterium tuberculosis clinical and laboratory strains.</title>
        <authorList>
            <person name="Fleischmann R.D."/>
            <person name="Alland D."/>
            <person name="Eisen J.A."/>
            <person name="Carpenter L."/>
            <person name="White O."/>
            <person name="Peterson J.D."/>
            <person name="DeBoy R.T."/>
            <person name="Dodson R.J."/>
            <person name="Gwinn M.L."/>
            <person name="Haft D.H."/>
            <person name="Hickey E.K."/>
            <person name="Kolonay J.F."/>
            <person name="Nelson W.C."/>
            <person name="Umayam L.A."/>
            <person name="Ermolaeva M.D."/>
            <person name="Salzberg S.L."/>
            <person name="Delcher A."/>
            <person name="Utterback T.R."/>
            <person name="Weidman J.F."/>
            <person name="Khouri H.M."/>
            <person name="Gill J."/>
            <person name="Mikula A."/>
            <person name="Bishai W."/>
            <person name="Jacobs W.R. Jr."/>
            <person name="Venter J.C."/>
            <person name="Fraser C.M."/>
        </authorList>
    </citation>
    <scope>NUCLEOTIDE SEQUENCE [LARGE SCALE GENOMIC DNA]</scope>
    <source>
        <strain>CDC 1551 / Oshkosh</strain>
    </source>
</reference>
<sequence length="299" mass="31089">MKGRSALLRALWIAALSFGLGGVAVAAEPTAKAAPYENLMVPSPSMGRDIPVAFLAGGPHAVYLLDAFNAGPDVSNWVTAGNAMNTLAGKGISVVAPAGGAYSMYTNWEQDGSKQWDTFLSAELPDWLAANRGLAPGGHAAVGAAQGGYGAMALAAFHPDRFGFAGSMSGFLYPSNTTTNGAIAAGMQQFGGVDTNGMWGAPQLGRWKWHDPWVHASLLAQNNTRVWVWSPTNPGASDPAAMIGQAAEAMGNSRMFYNQYRSVGGHNGHFDFPASGDNGWGSWAPQLGAMSGDIVGAIR</sequence>
<accession>P9WQN6</accession>
<accession>L0TFA7</accession>
<accession>O33176</accession>
<accession>P0A4V6</accession>
<accession>Q48923</accession>
<keyword id="KW-0012">Acyltransferase</keyword>
<keyword id="KW-1185">Reference proteome</keyword>
<keyword id="KW-0964">Secreted</keyword>
<keyword id="KW-0732">Signal</keyword>
<keyword id="KW-0808">Transferase</keyword>
<name>MPT51_MYCTO</name>
<protein>
    <recommendedName>
        <fullName>MPT51/MPB51 antigen</fullName>
    </recommendedName>
</protein>
<proteinExistence type="inferred from homology"/>